<reference key="1">
    <citation type="journal article" date="2002" name="Nature">
        <title>The genome sequence of Schizosaccharomyces pombe.</title>
        <authorList>
            <person name="Wood V."/>
            <person name="Gwilliam R."/>
            <person name="Rajandream M.A."/>
            <person name="Lyne M.H."/>
            <person name="Lyne R."/>
            <person name="Stewart A."/>
            <person name="Sgouros J.G."/>
            <person name="Peat N."/>
            <person name="Hayles J."/>
            <person name="Baker S.G."/>
            <person name="Basham D."/>
            <person name="Bowman S."/>
            <person name="Brooks K."/>
            <person name="Brown D."/>
            <person name="Brown S."/>
            <person name="Chillingworth T."/>
            <person name="Churcher C.M."/>
            <person name="Collins M."/>
            <person name="Connor R."/>
            <person name="Cronin A."/>
            <person name="Davis P."/>
            <person name="Feltwell T."/>
            <person name="Fraser A."/>
            <person name="Gentles S."/>
            <person name="Goble A."/>
            <person name="Hamlin N."/>
            <person name="Harris D.E."/>
            <person name="Hidalgo J."/>
            <person name="Hodgson G."/>
            <person name="Holroyd S."/>
            <person name="Hornsby T."/>
            <person name="Howarth S."/>
            <person name="Huckle E.J."/>
            <person name="Hunt S."/>
            <person name="Jagels K."/>
            <person name="James K.D."/>
            <person name="Jones L."/>
            <person name="Jones M."/>
            <person name="Leather S."/>
            <person name="McDonald S."/>
            <person name="McLean J."/>
            <person name="Mooney P."/>
            <person name="Moule S."/>
            <person name="Mungall K.L."/>
            <person name="Murphy L.D."/>
            <person name="Niblett D."/>
            <person name="Odell C."/>
            <person name="Oliver K."/>
            <person name="O'Neil S."/>
            <person name="Pearson D."/>
            <person name="Quail M.A."/>
            <person name="Rabbinowitsch E."/>
            <person name="Rutherford K.M."/>
            <person name="Rutter S."/>
            <person name="Saunders D."/>
            <person name="Seeger K."/>
            <person name="Sharp S."/>
            <person name="Skelton J."/>
            <person name="Simmonds M.N."/>
            <person name="Squares R."/>
            <person name="Squares S."/>
            <person name="Stevens K."/>
            <person name="Taylor K."/>
            <person name="Taylor R.G."/>
            <person name="Tivey A."/>
            <person name="Walsh S.V."/>
            <person name="Warren T."/>
            <person name="Whitehead S."/>
            <person name="Woodward J.R."/>
            <person name="Volckaert G."/>
            <person name="Aert R."/>
            <person name="Robben J."/>
            <person name="Grymonprez B."/>
            <person name="Weltjens I."/>
            <person name="Vanstreels E."/>
            <person name="Rieger M."/>
            <person name="Schaefer M."/>
            <person name="Mueller-Auer S."/>
            <person name="Gabel C."/>
            <person name="Fuchs M."/>
            <person name="Duesterhoeft A."/>
            <person name="Fritzc C."/>
            <person name="Holzer E."/>
            <person name="Moestl D."/>
            <person name="Hilbert H."/>
            <person name="Borzym K."/>
            <person name="Langer I."/>
            <person name="Beck A."/>
            <person name="Lehrach H."/>
            <person name="Reinhardt R."/>
            <person name="Pohl T.M."/>
            <person name="Eger P."/>
            <person name="Zimmermann W."/>
            <person name="Wedler H."/>
            <person name="Wambutt R."/>
            <person name="Purnelle B."/>
            <person name="Goffeau A."/>
            <person name="Cadieu E."/>
            <person name="Dreano S."/>
            <person name="Gloux S."/>
            <person name="Lelaure V."/>
            <person name="Mottier S."/>
            <person name="Galibert F."/>
            <person name="Aves S.J."/>
            <person name="Xiang Z."/>
            <person name="Hunt C."/>
            <person name="Moore K."/>
            <person name="Hurst S.M."/>
            <person name="Lucas M."/>
            <person name="Rochet M."/>
            <person name="Gaillardin C."/>
            <person name="Tallada V.A."/>
            <person name="Garzon A."/>
            <person name="Thode G."/>
            <person name="Daga R.R."/>
            <person name="Cruzado L."/>
            <person name="Jimenez J."/>
            <person name="Sanchez M."/>
            <person name="del Rey F."/>
            <person name="Benito J."/>
            <person name="Dominguez A."/>
            <person name="Revuelta J.L."/>
            <person name="Moreno S."/>
            <person name="Armstrong J."/>
            <person name="Forsburg S.L."/>
            <person name="Cerutti L."/>
            <person name="Lowe T."/>
            <person name="McCombie W.R."/>
            <person name="Paulsen I."/>
            <person name="Potashkin J."/>
            <person name="Shpakovski G.V."/>
            <person name="Ussery D."/>
            <person name="Barrell B.G."/>
            <person name="Nurse P."/>
        </authorList>
    </citation>
    <scope>NUCLEOTIDE SEQUENCE [LARGE SCALE GENOMIC DNA]</scope>
    <source>
        <strain>972 / ATCC 24843</strain>
    </source>
</reference>
<reference key="2">
    <citation type="journal article" date="2005" name="Curr. Biol.">
        <title>A large-scale screen in S. pombe identifies seven novel genes required for critical meiotic events.</title>
        <authorList>
            <person name="Martin-Castellanos C."/>
            <person name="Blanco M."/>
            <person name="Rozalen A.E."/>
            <person name="Perez-Hidalgo L."/>
            <person name="Garcia A.I."/>
            <person name="Conde F."/>
            <person name="Mata J."/>
            <person name="Ellermeier C."/>
            <person name="Davis L."/>
            <person name="San-Segundo P."/>
            <person name="Smith G.R."/>
            <person name="Moreno S."/>
        </authorList>
    </citation>
    <scope>FUNCTION IN MEIOSIS</scope>
</reference>
<reference key="3">
    <citation type="journal article" date="2006" name="Nat. Biotechnol.">
        <title>ORFeome cloning and global analysis of protein localization in the fission yeast Schizosaccharomyces pombe.</title>
        <authorList>
            <person name="Matsuyama A."/>
            <person name="Arai R."/>
            <person name="Yashiroda Y."/>
            <person name="Shirai A."/>
            <person name="Kamata A."/>
            <person name="Sekido S."/>
            <person name="Kobayashi Y."/>
            <person name="Hashimoto A."/>
            <person name="Hamamoto M."/>
            <person name="Hiraoka Y."/>
            <person name="Horinouchi S."/>
            <person name="Yoshida M."/>
        </authorList>
    </citation>
    <scope>SUBCELLULAR LOCATION [LARGE SCALE ANALYSIS]</scope>
</reference>
<evidence type="ECO:0000255" key="1">
    <source>
        <dbReference type="PROSITE-ProRule" id="PRU00176"/>
    </source>
</evidence>
<evidence type="ECO:0000256" key="2">
    <source>
        <dbReference type="SAM" id="MobiDB-lite"/>
    </source>
</evidence>
<evidence type="ECO:0000269" key="3">
    <source>
    </source>
</evidence>
<evidence type="ECO:0000269" key="4">
    <source>
    </source>
</evidence>
<accession>O13674</accession>
<protein>
    <recommendedName>
        <fullName>Meiotically up-regulated gene 24 protein</fullName>
    </recommendedName>
</protein>
<dbReference type="EMBL" id="CU329672">
    <property type="protein sequence ID" value="CAA20839.1"/>
    <property type="molecule type" value="Genomic_DNA"/>
</dbReference>
<dbReference type="PIR" id="T41584">
    <property type="entry name" value="T41584"/>
</dbReference>
<dbReference type="RefSeq" id="NP_588373.1">
    <property type="nucleotide sequence ID" value="NM_001023364.2"/>
</dbReference>
<dbReference type="SMR" id="O13674"/>
<dbReference type="BioGRID" id="276049">
    <property type="interactions" value="4"/>
</dbReference>
<dbReference type="STRING" id="284812.O13674"/>
<dbReference type="iPTMnet" id="O13674"/>
<dbReference type="PaxDb" id="4896-SPCC74.09.1"/>
<dbReference type="EnsemblFungi" id="SPCC74.09.1">
    <property type="protein sequence ID" value="SPCC74.09.1:pep"/>
    <property type="gene ID" value="SPCC74.09"/>
</dbReference>
<dbReference type="GeneID" id="2539486"/>
<dbReference type="KEGG" id="spo:2539486"/>
<dbReference type="PomBase" id="SPCC74.09">
    <property type="gene designation" value="mug24"/>
</dbReference>
<dbReference type="VEuPathDB" id="FungiDB:SPCC74.09"/>
<dbReference type="eggNOG" id="KOG0118">
    <property type="taxonomic scope" value="Eukaryota"/>
</dbReference>
<dbReference type="HOGENOM" id="CLU_419298_0_0_1"/>
<dbReference type="InParanoid" id="O13674"/>
<dbReference type="OMA" id="FHYIPEK"/>
<dbReference type="PhylomeDB" id="O13674"/>
<dbReference type="PRO" id="PR:O13674"/>
<dbReference type="Proteomes" id="UP000002485">
    <property type="component" value="Chromosome III"/>
</dbReference>
<dbReference type="GO" id="GO:0005829">
    <property type="term" value="C:cytosol"/>
    <property type="evidence" value="ECO:0007005"/>
    <property type="project" value="PomBase"/>
</dbReference>
<dbReference type="GO" id="GO:0003723">
    <property type="term" value="F:RNA binding"/>
    <property type="evidence" value="ECO:0000318"/>
    <property type="project" value="GO_Central"/>
</dbReference>
<dbReference type="GO" id="GO:0051321">
    <property type="term" value="P:meiotic cell cycle"/>
    <property type="evidence" value="ECO:0007669"/>
    <property type="project" value="UniProtKB-KW"/>
</dbReference>
<dbReference type="CDD" id="cd12261">
    <property type="entry name" value="RRM1_3_MRN1"/>
    <property type="match status" value="1"/>
</dbReference>
<dbReference type="CDD" id="cd12262">
    <property type="entry name" value="RRM2_4_MRN1"/>
    <property type="match status" value="1"/>
</dbReference>
<dbReference type="CDD" id="cd12523">
    <property type="entry name" value="RRM2_MRN1"/>
    <property type="match status" value="1"/>
</dbReference>
<dbReference type="CDD" id="cd12521">
    <property type="entry name" value="RRM3_MRN1"/>
    <property type="match status" value="1"/>
</dbReference>
<dbReference type="FunFam" id="3.30.70.330:FF:000120">
    <property type="entry name" value="Negative regulator of differentiation 1"/>
    <property type="match status" value="1"/>
</dbReference>
<dbReference type="FunFam" id="3.30.70.330:FF:000400">
    <property type="entry name" value="Negative regulator of differentiation 1"/>
    <property type="match status" value="1"/>
</dbReference>
<dbReference type="Gene3D" id="3.30.70.330">
    <property type="match status" value="3"/>
</dbReference>
<dbReference type="InterPro" id="IPR039171">
    <property type="entry name" value="Cwc2/Slt11"/>
</dbReference>
<dbReference type="InterPro" id="IPR012677">
    <property type="entry name" value="Nucleotide-bd_a/b_plait_sf"/>
</dbReference>
<dbReference type="InterPro" id="IPR035979">
    <property type="entry name" value="RBD_domain_sf"/>
</dbReference>
<dbReference type="InterPro" id="IPR000504">
    <property type="entry name" value="RRM_dom"/>
</dbReference>
<dbReference type="PANTHER" id="PTHR14089">
    <property type="entry name" value="PRE-MRNA-SPLICING FACTOR RBM22"/>
    <property type="match status" value="1"/>
</dbReference>
<dbReference type="PANTHER" id="PTHR14089:SF8">
    <property type="entry name" value="RNA-BINDING PROTEIN MRN1"/>
    <property type="match status" value="1"/>
</dbReference>
<dbReference type="Pfam" id="PF00076">
    <property type="entry name" value="RRM_1"/>
    <property type="match status" value="2"/>
</dbReference>
<dbReference type="SMART" id="SM00360">
    <property type="entry name" value="RRM"/>
    <property type="match status" value="4"/>
</dbReference>
<dbReference type="SUPFAM" id="SSF54928">
    <property type="entry name" value="RNA-binding domain, RBD"/>
    <property type="match status" value="2"/>
</dbReference>
<dbReference type="PROSITE" id="PS50102">
    <property type="entry name" value="RRM"/>
    <property type="match status" value="3"/>
</dbReference>
<comment type="function">
    <text evidence="3">Has a role in meiosis.</text>
</comment>
<comment type="subcellular location">
    <subcellularLocation>
        <location evidence="4">Cytoplasm</location>
    </subcellularLocation>
</comment>
<proteinExistence type="evidence at protein level"/>
<gene>
    <name type="primary">mug24</name>
    <name type="ORF">SPCC74.09</name>
</gene>
<sequence>MAIMHKIGCAGSEVETDRVLEKDQANNGHFVDSDCCFQETGSTGTANSICTLNDSEDDNSSLNSVDNNECTNLDCGGKKHKNLSPNPSFHVNINAAEFIPKSHNGYAPKSMNPPPEQLDSPCYPHFDQDSSSVIYPSPPSTYYPNMYVSANTFIPMPYAHYTDNMYHAKPVNRPNFLPREGTPPPFAQQPAEQFSPFNSEYESLLDFRALILGNLPVDYKISELLSLIHSGPLEKIQSNPGKRRIIITFLDSADAFFFYERYHPRGFIFHGRPLKLTFARPSPLPESIQNFCSNTAASRNVFIGNLPSSYHEKEIEEAFGKFGKIEHIKILSKKNIAFVHFLNIRDAIKVVRTLSCDPDYHSWRIFFGSDRCANHPPSFDERSCFTSKQNPDTTSDRCRQQESKDNGNRTVFLGNLHTKTKGHEICDLIRHGGLQDFHYIPEKHICFVTFITYSAANAFHDYLAEEEVLLHGRRIKVGWGKESGPLPRVLEDSILMGASRNVYFSHISDSLTTEELELILRQYGEIESIKYLKNRSSGFVAYTNISNAMKAVNGLPIHPLFKKSKIRYAPDRCEQELQKSKSNSPIQQNVPLQQFITPPFSYPVAYCPAIPPGSDPILNFGIQYQPFIPFTAVPSFPFNCNVPNYPQTSDHEND</sequence>
<keyword id="KW-0963">Cytoplasm</keyword>
<keyword id="KW-0469">Meiosis</keyword>
<keyword id="KW-1185">Reference proteome</keyword>
<keyword id="KW-0677">Repeat</keyword>
<keyword id="KW-0694">RNA-binding</keyword>
<feature type="chain" id="PRO_0000082024" description="Meiotically up-regulated gene 24 protein">
    <location>
        <begin position="1"/>
        <end position="654"/>
    </location>
</feature>
<feature type="domain" description="RRM 1" evidence="1">
    <location>
        <begin position="299"/>
        <end position="355"/>
    </location>
</feature>
<feature type="domain" description="RRM 2" evidence="1">
    <location>
        <begin position="409"/>
        <end position="482"/>
    </location>
</feature>
<feature type="domain" description="RRM 3" evidence="1">
    <location>
        <begin position="500"/>
        <end position="571"/>
    </location>
</feature>
<feature type="region of interest" description="Disordered" evidence="2">
    <location>
        <begin position="383"/>
        <end position="404"/>
    </location>
</feature>
<feature type="compositionally biased region" description="Polar residues" evidence="2">
    <location>
        <begin position="384"/>
        <end position="393"/>
    </location>
</feature>
<feature type="compositionally biased region" description="Basic and acidic residues" evidence="2">
    <location>
        <begin position="394"/>
        <end position="404"/>
    </location>
</feature>
<organism>
    <name type="scientific">Schizosaccharomyces pombe (strain 972 / ATCC 24843)</name>
    <name type="common">Fission yeast</name>
    <dbReference type="NCBI Taxonomy" id="284812"/>
    <lineage>
        <taxon>Eukaryota</taxon>
        <taxon>Fungi</taxon>
        <taxon>Dikarya</taxon>
        <taxon>Ascomycota</taxon>
        <taxon>Taphrinomycotina</taxon>
        <taxon>Schizosaccharomycetes</taxon>
        <taxon>Schizosaccharomycetales</taxon>
        <taxon>Schizosaccharomycetaceae</taxon>
        <taxon>Schizosaccharomyces</taxon>
    </lineage>
</organism>
<name>MUG24_SCHPO</name>